<sequence>METIAKHRYARTSAQKARLVADLIRGKKVAQALEILTFTNKKAAALVKKVLESAIANAEHNDGADIDDLKVAKIFVDEGPSMKRVMPRAKGRADRILKRTSHITVVVSDR</sequence>
<name>RL22_HAEIG</name>
<reference key="1">
    <citation type="journal article" date="2007" name="Genome Biol.">
        <title>Characterization and modeling of the Haemophilus influenzae core and supragenomes based on the complete genomic sequences of Rd and 12 clinical nontypeable strains.</title>
        <authorList>
            <person name="Hogg J.S."/>
            <person name="Hu F.Z."/>
            <person name="Janto B."/>
            <person name="Boissy R."/>
            <person name="Hayes J."/>
            <person name="Keefe R."/>
            <person name="Post J.C."/>
            <person name="Ehrlich G.D."/>
        </authorList>
    </citation>
    <scope>NUCLEOTIDE SEQUENCE [LARGE SCALE GENOMIC DNA]</scope>
    <source>
        <strain>PittGG</strain>
    </source>
</reference>
<protein>
    <recommendedName>
        <fullName evidence="1">Large ribosomal subunit protein uL22</fullName>
    </recommendedName>
    <alternativeName>
        <fullName evidence="2">50S ribosomal protein L22</fullName>
    </alternativeName>
</protein>
<feature type="chain" id="PRO_1000052578" description="Large ribosomal subunit protein uL22">
    <location>
        <begin position="1"/>
        <end position="110"/>
    </location>
</feature>
<dbReference type="EMBL" id="CP000672">
    <property type="protein sequence ID" value="ABR00341.1"/>
    <property type="molecule type" value="Genomic_DNA"/>
</dbReference>
<dbReference type="SMR" id="A5UHT5"/>
<dbReference type="KEGG" id="hiq:CGSHiGG_07410"/>
<dbReference type="HOGENOM" id="CLU_083987_3_3_6"/>
<dbReference type="Proteomes" id="UP000001990">
    <property type="component" value="Chromosome"/>
</dbReference>
<dbReference type="GO" id="GO:0022625">
    <property type="term" value="C:cytosolic large ribosomal subunit"/>
    <property type="evidence" value="ECO:0007669"/>
    <property type="project" value="TreeGrafter"/>
</dbReference>
<dbReference type="GO" id="GO:0019843">
    <property type="term" value="F:rRNA binding"/>
    <property type="evidence" value="ECO:0007669"/>
    <property type="project" value="UniProtKB-UniRule"/>
</dbReference>
<dbReference type="GO" id="GO:0003735">
    <property type="term" value="F:structural constituent of ribosome"/>
    <property type="evidence" value="ECO:0007669"/>
    <property type="project" value="InterPro"/>
</dbReference>
<dbReference type="GO" id="GO:0006412">
    <property type="term" value="P:translation"/>
    <property type="evidence" value="ECO:0007669"/>
    <property type="project" value="UniProtKB-UniRule"/>
</dbReference>
<dbReference type="CDD" id="cd00336">
    <property type="entry name" value="Ribosomal_L22"/>
    <property type="match status" value="1"/>
</dbReference>
<dbReference type="FunFam" id="3.90.470.10:FF:000001">
    <property type="entry name" value="50S ribosomal protein L22"/>
    <property type="match status" value="1"/>
</dbReference>
<dbReference type="Gene3D" id="3.90.470.10">
    <property type="entry name" value="Ribosomal protein L22/L17"/>
    <property type="match status" value="1"/>
</dbReference>
<dbReference type="HAMAP" id="MF_01331_B">
    <property type="entry name" value="Ribosomal_uL22_B"/>
    <property type="match status" value="1"/>
</dbReference>
<dbReference type="InterPro" id="IPR001063">
    <property type="entry name" value="Ribosomal_uL22"/>
</dbReference>
<dbReference type="InterPro" id="IPR005727">
    <property type="entry name" value="Ribosomal_uL22_bac/chlpt-type"/>
</dbReference>
<dbReference type="InterPro" id="IPR047867">
    <property type="entry name" value="Ribosomal_uL22_bac/org-type"/>
</dbReference>
<dbReference type="InterPro" id="IPR018260">
    <property type="entry name" value="Ribosomal_uL22_CS"/>
</dbReference>
<dbReference type="InterPro" id="IPR036394">
    <property type="entry name" value="Ribosomal_uL22_sf"/>
</dbReference>
<dbReference type="NCBIfam" id="TIGR01044">
    <property type="entry name" value="rplV_bact"/>
    <property type="match status" value="1"/>
</dbReference>
<dbReference type="PANTHER" id="PTHR13501">
    <property type="entry name" value="CHLOROPLAST 50S RIBOSOMAL PROTEIN L22-RELATED"/>
    <property type="match status" value="1"/>
</dbReference>
<dbReference type="PANTHER" id="PTHR13501:SF8">
    <property type="entry name" value="LARGE RIBOSOMAL SUBUNIT PROTEIN UL22M"/>
    <property type="match status" value="1"/>
</dbReference>
<dbReference type="Pfam" id="PF00237">
    <property type="entry name" value="Ribosomal_L22"/>
    <property type="match status" value="1"/>
</dbReference>
<dbReference type="SUPFAM" id="SSF54843">
    <property type="entry name" value="Ribosomal protein L22"/>
    <property type="match status" value="1"/>
</dbReference>
<dbReference type="PROSITE" id="PS00464">
    <property type="entry name" value="RIBOSOMAL_L22"/>
    <property type="match status" value="1"/>
</dbReference>
<proteinExistence type="inferred from homology"/>
<evidence type="ECO:0000255" key="1">
    <source>
        <dbReference type="HAMAP-Rule" id="MF_01331"/>
    </source>
</evidence>
<evidence type="ECO:0000305" key="2"/>
<comment type="function">
    <text evidence="1">This protein binds specifically to 23S rRNA; its binding is stimulated by other ribosomal proteins, e.g. L4, L17, and L20. It is important during the early stages of 50S assembly. It makes multiple contacts with different domains of the 23S rRNA in the assembled 50S subunit and ribosome (By similarity).</text>
</comment>
<comment type="function">
    <text evidence="1">The globular domain of the protein is located near the polypeptide exit tunnel on the outside of the subunit, while an extended beta-hairpin is found that lines the wall of the exit tunnel in the center of the 70S ribosome.</text>
</comment>
<comment type="subunit">
    <text evidence="1">Part of the 50S ribosomal subunit.</text>
</comment>
<comment type="similarity">
    <text evidence="1">Belongs to the universal ribosomal protein uL22 family.</text>
</comment>
<keyword id="KW-0687">Ribonucleoprotein</keyword>
<keyword id="KW-0689">Ribosomal protein</keyword>
<keyword id="KW-0694">RNA-binding</keyword>
<keyword id="KW-0699">rRNA-binding</keyword>
<gene>
    <name evidence="1" type="primary">rplV</name>
    <name type="ordered locus">CGSHiGG_07410</name>
</gene>
<organism>
    <name type="scientific">Haemophilus influenzae (strain PittGG)</name>
    <dbReference type="NCBI Taxonomy" id="374931"/>
    <lineage>
        <taxon>Bacteria</taxon>
        <taxon>Pseudomonadati</taxon>
        <taxon>Pseudomonadota</taxon>
        <taxon>Gammaproteobacteria</taxon>
        <taxon>Pasteurellales</taxon>
        <taxon>Pasteurellaceae</taxon>
        <taxon>Haemophilus</taxon>
    </lineage>
</organism>
<accession>A5UHT5</accession>